<reference key="1">
    <citation type="journal article" date="1989" name="Mol. Gen. Genet.">
        <title>The complete sequence of the rice (Oryza sativa) chloroplast genome: intermolecular recombination between distinct tRNA genes accounts for a major plastid DNA inversion during the evolution of the cereals.</title>
        <authorList>
            <person name="Hiratsuka J."/>
            <person name="Shimada H."/>
            <person name="Whittier R."/>
            <person name="Ishibashi T."/>
            <person name="Sakamoto M."/>
            <person name="Mori M."/>
            <person name="Kondo C."/>
            <person name="Honji Y."/>
            <person name="Sun C.-R."/>
            <person name="Meng B.-Y."/>
            <person name="Li Y.-Q."/>
            <person name="Kanno A."/>
            <person name="Nishizawa Y."/>
            <person name="Hirai A."/>
            <person name="Shinozaki K."/>
            <person name="Sugiura M."/>
        </authorList>
    </citation>
    <scope>NUCLEOTIDE SEQUENCE [LARGE SCALE GENOMIC DNA]</scope>
    <source>
        <strain>cv. Nipponbare</strain>
    </source>
</reference>
<reference key="2">
    <citation type="journal article" date="2004" name="Plant Physiol.">
        <title>A comparison of rice chloroplast genomes.</title>
        <authorList>
            <person name="Tang J."/>
            <person name="Xia H."/>
            <person name="Cao M."/>
            <person name="Zhang X."/>
            <person name="Zeng W."/>
            <person name="Hu S."/>
            <person name="Tong W."/>
            <person name="Wang J."/>
            <person name="Wang J."/>
            <person name="Yu J."/>
            <person name="Yang H."/>
            <person name="Zhu L."/>
        </authorList>
    </citation>
    <scope>NUCLEOTIDE SEQUENCE [LARGE SCALE GENOMIC DNA]</scope>
    <source>
        <strain>cv. Nipponbare</strain>
    </source>
</reference>
<proteinExistence type="inferred from homology"/>
<evidence type="ECO:0000255" key="1">
    <source>
        <dbReference type="HAMAP-Rule" id="MF_00458"/>
    </source>
</evidence>
<evidence type="ECO:0000305" key="2"/>
<organism>
    <name type="scientific">Oryza sativa subsp. japonica</name>
    <name type="common">Rice</name>
    <dbReference type="NCBI Taxonomy" id="39947"/>
    <lineage>
        <taxon>Eukaryota</taxon>
        <taxon>Viridiplantae</taxon>
        <taxon>Streptophyta</taxon>
        <taxon>Embryophyta</taxon>
        <taxon>Tracheophyta</taxon>
        <taxon>Spermatophyta</taxon>
        <taxon>Magnoliopsida</taxon>
        <taxon>Liliopsida</taxon>
        <taxon>Poales</taxon>
        <taxon>Poaceae</taxon>
        <taxon>BOP clade</taxon>
        <taxon>Oryzoideae</taxon>
        <taxon>Oryzeae</taxon>
        <taxon>Oryzinae</taxon>
        <taxon>Oryza</taxon>
        <taxon>Oryza sativa</taxon>
    </lineage>
</organism>
<feature type="chain" id="PRO_0000288983" description="Photosystem I P700 chlorophyll a apoprotein A1">
    <location>
        <begin position="1"/>
        <end position="750"/>
    </location>
</feature>
<feature type="transmembrane region" description="Helical; Name=I" evidence="1">
    <location>
        <begin position="70"/>
        <end position="93"/>
    </location>
</feature>
<feature type="transmembrane region" description="Helical; Name=II" evidence="1">
    <location>
        <begin position="156"/>
        <end position="179"/>
    </location>
</feature>
<feature type="transmembrane region" description="Helical; Name=III" evidence="1">
    <location>
        <begin position="195"/>
        <end position="219"/>
    </location>
</feature>
<feature type="transmembrane region" description="Helical; Name=IV" evidence="1">
    <location>
        <begin position="291"/>
        <end position="309"/>
    </location>
</feature>
<feature type="transmembrane region" description="Helical; Name=V" evidence="1">
    <location>
        <begin position="346"/>
        <end position="369"/>
    </location>
</feature>
<feature type="transmembrane region" description="Helical; Name=VI" evidence="1">
    <location>
        <begin position="385"/>
        <end position="411"/>
    </location>
</feature>
<feature type="transmembrane region" description="Helical; Name=VII" evidence="1">
    <location>
        <begin position="433"/>
        <end position="455"/>
    </location>
</feature>
<feature type="transmembrane region" description="Helical; Name=VIII" evidence="1">
    <location>
        <begin position="531"/>
        <end position="549"/>
    </location>
</feature>
<feature type="transmembrane region" description="Helical; Name=IX" evidence="1">
    <location>
        <begin position="589"/>
        <end position="610"/>
    </location>
</feature>
<feature type="transmembrane region" description="Helical; Name=X" evidence="1">
    <location>
        <begin position="664"/>
        <end position="686"/>
    </location>
</feature>
<feature type="transmembrane region" description="Helical; Name=XI" evidence="1">
    <location>
        <begin position="724"/>
        <end position="744"/>
    </location>
</feature>
<feature type="binding site" evidence="1">
    <location>
        <position position="573"/>
    </location>
    <ligand>
        <name>[4Fe-4S] cluster</name>
        <dbReference type="ChEBI" id="CHEBI:49883"/>
        <note>ligand shared between dimeric partners</note>
    </ligand>
</feature>
<feature type="binding site" evidence="1">
    <location>
        <position position="582"/>
    </location>
    <ligand>
        <name>[4Fe-4S] cluster</name>
        <dbReference type="ChEBI" id="CHEBI:49883"/>
        <note>ligand shared between dimeric partners</note>
    </ligand>
</feature>
<feature type="binding site" description="axial binding residue" evidence="1">
    <location>
        <position position="675"/>
    </location>
    <ligand>
        <name>chlorophyll a'</name>
        <dbReference type="ChEBI" id="CHEBI:189419"/>
        <label>A1</label>
    </ligand>
    <ligandPart>
        <name>Mg</name>
        <dbReference type="ChEBI" id="CHEBI:25107"/>
    </ligandPart>
</feature>
<feature type="binding site" description="axial binding residue" evidence="1">
    <location>
        <position position="683"/>
    </location>
    <ligand>
        <name>chlorophyll a</name>
        <dbReference type="ChEBI" id="CHEBI:58416"/>
        <label>A3</label>
    </ligand>
    <ligandPart>
        <name>Mg</name>
        <dbReference type="ChEBI" id="CHEBI:25107"/>
    </ligandPart>
</feature>
<feature type="binding site" evidence="1">
    <location>
        <position position="691"/>
    </location>
    <ligand>
        <name>chlorophyll a</name>
        <dbReference type="ChEBI" id="CHEBI:58416"/>
        <label>A3</label>
    </ligand>
</feature>
<feature type="binding site" evidence="1">
    <location>
        <position position="692"/>
    </location>
    <ligand>
        <name>phylloquinone</name>
        <dbReference type="ChEBI" id="CHEBI:18067"/>
        <label>A</label>
    </ligand>
</feature>
<feature type="sequence conflict" description="In Ref. 1; CAA33996." evidence="2" ref="1">
    <original>I</original>
    <variation>L</variation>
    <location>
        <position position="36"/>
    </location>
</feature>
<feature type="sequence conflict" description="In Ref. 1; CAA33996." evidence="2" ref="1">
    <original>T</original>
    <variation>S</variation>
    <location>
        <position position="138"/>
    </location>
</feature>
<feature type="sequence conflict" description="In Ref. 1; CAA33996." evidence="2" ref="1">
    <original>FQ</original>
    <variation>SH</variation>
    <location>
        <begin position="188"/>
        <end position="189"/>
    </location>
</feature>
<feature type="sequence conflict" description="In Ref. 1; CAA33996." evidence="2" ref="1">
    <original>G</original>
    <variation>R</variation>
    <location>
        <position position="257"/>
    </location>
</feature>
<feature type="sequence conflict" description="In Ref. 1; CAA33996." evidence="2" ref="1">
    <original>G</original>
    <variation>R</variation>
    <location>
        <position position="334"/>
    </location>
</feature>
<feature type="sequence conflict" description="In Ref. 1; CAA33996." evidence="2" ref="1">
    <original>SV</original>
    <variation>RL</variation>
    <location>
        <begin position="493"/>
        <end position="494"/>
    </location>
</feature>
<keyword id="KW-0004">4Fe-4S</keyword>
<keyword id="KW-0148">Chlorophyll</keyword>
<keyword id="KW-0150">Chloroplast</keyword>
<keyword id="KW-0157">Chromophore</keyword>
<keyword id="KW-0249">Electron transport</keyword>
<keyword id="KW-0408">Iron</keyword>
<keyword id="KW-0411">Iron-sulfur</keyword>
<keyword id="KW-0460">Magnesium</keyword>
<keyword id="KW-0472">Membrane</keyword>
<keyword id="KW-0479">Metal-binding</keyword>
<keyword id="KW-0560">Oxidoreductase</keyword>
<keyword id="KW-0602">Photosynthesis</keyword>
<keyword id="KW-0603">Photosystem I</keyword>
<keyword id="KW-0934">Plastid</keyword>
<keyword id="KW-1185">Reference proteome</keyword>
<keyword id="KW-0793">Thylakoid</keyword>
<keyword id="KW-0812">Transmembrane</keyword>
<keyword id="KW-1133">Transmembrane helix</keyword>
<keyword id="KW-0813">Transport</keyword>
<name>PSAA_ORYSJ</name>
<dbReference type="EC" id="1.97.1.12" evidence="1"/>
<dbReference type="EMBL" id="X15901">
    <property type="protein sequence ID" value="CAA33996.1"/>
    <property type="molecule type" value="Genomic_DNA"/>
</dbReference>
<dbReference type="EMBL" id="AY522330">
    <property type="protein sequence ID" value="AAS46121.1"/>
    <property type="status" value="ALT_INIT"/>
    <property type="molecule type" value="Genomic_DNA"/>
</dbReference>
<dbReference type="PIR" id="JQ0223">
    <property type="entry name" value="A1RZP7"/>
</dbReference>
<dbReference type="RefSeq" id="NP_039383.1">
    <property type="nucleotide sequence ID" value="NC_001320.1"/>
</dbReference>
<dbReference type="SMR" id="P0C355"/>
<dbReference type="BioGRID" id="792774">
    <property type="interactions" value="1"/>
</dbReference>
<dbReference type="FunCoup" id="P0C355">
    <property type="interactions" value="380"/>
</dbReference>
<dbReference type="STRING" id="39947.P0C355"/>
<dbReference type="PaxDb" id="39947-P0C355"/>
<dbReference type="GeneID" id="3131406"/>
<dbReference type="KEGG" id="dosa:psaA"/>
<dbReference type="KEGG" id="osa:3131406"/>
<dbReference type="InParanoid" id="P0C355"/>
<dbReference type="OrthoDB" id="1871948at2759"/>
<dbReference type="Proteomes" id="UP000059680">
    <property type="component" value="Chloroplast"/>
</dbReference>
<dbReference type="GO" id="GO:0009535">
    <property type="term" value="C:chloroplast thylakoid membrane"/>
    <property type="evidence" value="ECO:0007669"/>
    <property type="project" value="UniProtKB-SubCell"/>
</dbReference>
<dbReference type="GO" id="GO:0009522">
    <property type="term" value="C:photosystem I"/>
    <property type="evidence" value="ECO:0007669"/>
    <property type="project" value="UniProtKB-KW"/>
</dbReference>
<dbReference type="GO" id="GO:0009536">
    <property type="term" value="C:plastid"/>
    <property type="evidence" value="ECO:0000305"/>
    <property type="project" value="Gramene"/>
</dbReference>
<dbReference type="GO" id="GO:0051539">
    <property type="term" value="F:4 iron, 4 sulfur cluster binding"/>
    <property type="evidence" value="ECO:0007669"/>
    <property type="project" value="UniProtKB-KW"/>
</dbReference>
<dbReference type="GO" id="GO:0016168">
    <property type="term" value="F:chlorophyll binding"/>
    <property type="evidence" value="ECO:0007669"/>
    <property type="project" value="UniProtKB-KW"/>
</dbReference>
<dbReference type="GO" id="GO:0009055">
    <property type="term" value="F:electron transfer activity"/>
    <property type="evidence" value="ECO:0007669"/>
    <property type="project" value="UniProtKB-UniRule"/>
</dbReference>
<dbReference type="GO" id="GO:0000287">
    <property type="term" value="F:magnesium ion binding"/>
    <property type="evidence" value="ECO:0007669"/>
    <property type="project" value="UniProtKB-UniRule"/>
</dbReference>
<dbReference type="GO" id="GO:0016491">
    <property type="term" value="F:oxidoreductase activity"/>
    <property type="evidence" value="ECO:0007669"/>
    <property type="project" value="UniProtKB-KW"/>
</dbReference>
<dbReference type="GO" id="GO:0015979">
    <property type="term" value="P:photosynthesis"/>
    <property type="evidence" value="ECO:0007669"/>
    <property type="project" value="UniProtKB-UniRule"/>
</dbReference>
<dbReference type="FunFam" id="1.20.1130.10:FF:000001">
    <property type="entry name" value="Photosystem I P700 chlorophyll a apoprotein A2"/>
    <property type="match status" value="1"/>
</dbReference>
<dbReference type="Gene3D" id="1.20.1130.10">
    <property type="entry name" value="Photosystem I PsaA/PsaB"/>
    <property type="match status" value="1"/>
</dbReference>
<dbReference type="HAMAP" id="MF_00458">
    <property type="entry name" value="PSI_PsaA"/>
    <property type="match status" value="1"/>
</dbReference>
<dbReference type="InterPro" id="IPR006243">
    <property type="entry name" value="PSI_PsaA"/>
</dbReference>
<dbReference type="InterPro" id="IPR001280">
    <property type="entry name" value="PSI_PsaA/B"/>
</dbReference>
<dbReference type="InterPro" id="IPR020586">
    <property type="entry name" value="PSI_PsaA/B_CS"/>
</dbReference>
<dbReference type="InterPro" id="IPR036408">
    <property type="entry name" value="PSI_PsaA/B_sf"/>
</dbReference>
<dbReference type="NCBIfam" id="TIGR01335">
    <property type="entry name" value="psaA"/>
    <property type="match status" value="1"/>
</dbReference>
<dbReference type="PANTHER" id="PTHR30128">
    <property type="entry name" value="OUTER MEMBRANE PROTEIN, OMPA-RELATED"/>
    <property type="match status" value="1"/>
</dbReference>
<dbReference type="PANTHER" id="PTHR30128:SF19">
    <property type="entry name" value="PHOTOSYSTEM I P700 CHLOROPHYLL A APOPROTEIN A1-RELATED"/>
    <property type="match status" value="1"/>
</dbReference>
<dbReference type="Pfam" id="PF00223">
    <property type="entry name" value="PsaA_PsaB"/>
    <property type="match status" value="1"/>
</dbReference>
<dbReference type="PIRSF" id="PIRSF002905">
    <property type="entry name" value="PSI_A"/>
    <property type="match status" value="1"/>
</dbReference>
<dbReference type="PRINTS" id="PR00257">
    <property type="entry name" value="PHOTSYSPSAAB"/>
</dbReference>
<dbReference type="SUPFAM" id="SSF81558">
    <property type="entry name" value="Photosystem I subunits PsaA/PsaB"/>
    <property type="match status" value="1"/>
</dbReference>
<dbReference type="PROSITE" id="PS00419">
    <property type="entry name" value="PHOTOSYSTEM_I_PSAAB"/>
    <property type="match status" value="1"/>
</dbReference>
<gene>
    <name evidence="1" type="primary">psaA</name>
    <name type="ordered locus">LOC_Osp1g00340</name>
    <name type="ORF">Nip050</name>
</gene>
<accession>P0C355</accession>
<accession>P12155</accession>
<accession>Q6QY10</accession>
<accession>Q6QY74</accession>
<geneLocation type="chloroplast"/>
<protein>
    <recommendedName>
        <fullName evidence="1">Photosystem I P700 chlorophyll a apoprotein A1</fullName>
        <ecNumber evidence="1">1.97.1.12</ecNumber>
    </recommendedName>
    <alternativeName>
        <fullName evidence="1">PSI-A</fullName>
    </alternativeName>
    <alternativeName>
        <fullName evidence="1">PsaA</fullName>
    </alternativeName>
</protein>
<sequence length="750" mass="83169">MMIRSPEPEVKIVVDRDPVKTSFEEWARPGHFSRTIAKGPDTTTWIWNLHADAHDFDSHTGDLEEISRKVFSAHFGQLSIIFLWLSGMYFHGARFSNYEAWLSDPTHIGPSAQVVWPIVGQEILNGDVGGGFRGIQITSGFFQIWRASGITSELQLYCTAIGALIFASLMLFAGWFHYHKAAPKLAWFQDVESMLNHHLAGLLGLGSLSWAGHQIHVSLPINQFLDAGVDPKEIPLPHEFILNRDLLAQLYPSFAEGATPFFTLNWSKYAEFLSFRGGLDPITGGLWLSDIAHHHLAIAILFLIAGHMYRTNWGIGHGLKDILEAHKGPFTGQGHKGLYEILTTSWHAQLSLNLAMLGSTTIVVAHHMYSMPPYPYLATDYGTQLSLFTHHMWIGGFLIVGAAAHAAIFMVRDYDPTTRYNDLLDRVLRHRDAIISHLNWVCIFLGFHSFGLYIHNDTMSALGRPQDMFSDTAIQLQPIFAQWVQNLHAGAPSVTAPGATTSTSLTWGGGELVAVGGKVALLPIPLGTADFLVHHIHAFTIHVTVLILLKGVLFARSSRLIPDKANLGFRFPCDGPGRGGTCQVSAWDHVFLGLFWMYNSISVVIFHFSWKMQSDVWGTISDQGVVTHITGGNFAQSSITINGWLRDFLWAQASQVIQSYGSSLSAYGLFFLGAHFVWAFSLMFLFSGRGYWQELIESIVWAHNKLKVAPATQPRALSIIQGRAVGVTHYLLGGIATTWAFFLARIIAVG</sequence>
<comment type="function">
    <text>PsaA and PsaB bind P700, the primary electron donor of photosystem I (PSI), as well as the electron acceptors A0, A1 and FX. PSI is a plastocyanin-ferredoxin oxidoreductase, converting photonic excitation into a charge separation, which transfers an electron from the donor P700 chlorophyll pair to the spectroscopically characterized acceptors A0, A1, FX, FA and FB in turn. Oxidized P700 is reduced on the lumenal side of the thylakoid membrane by plastocyanin.</text>
</comment>
<comment type="catalytic activity">
    <reaction evidence="1">
        <text>reduced [plastocyanin] + hnu + oxidized [2Fe-2S]-[ferredoxin] = oxidized [plastocyanin] + reduced [2Fe-2S]-[ferredoxin]</text>
        <dbReference type="Rhea" id="RHEA:30407"/>
        <dbReference type="Rhea" id="RHEA-COMP:10000"/>
        <dbReference type="Rhea" id="RHEA-COMP:10001"/>
        <dbReference type="Rhea" id="RHEA-COMP:10039"/>
        <dbReference type="Rhea" id="RHEA-COMP:10040"/>
        <dbReference type="ChEBI" id="CHEBI:29036"/>
        <dbReference type="ChEBI" id="CHEBI:30212"/>
        <dbReference type="ChEBI" id="CHEBI:33737"/>
        <dbReference type="ChEBI" id="CHEBI:33738"/>
        <dbReference type="ChEBI" id="CHEBI:49552"/>
        <dbReference type="EC" id="1.97.1.12"/>
    </reaction>
</comment>
<comment type="cofactor">
    <text evidence="1">P700 is a chlorophyll a/chlorophyll a' dimer, A0 is one or more chlorophyll a, A1 is one or both phylloquinones and FX is a shared 4Fe-4S iron-sulfur center.</text>
</comment>
<comment type="subunit">
    <text evidence="1">The PsaA/B heterodimer binds the P700 chlorophyll special pair and subsequent electron acceptors. PSI consists of a core antenna complex that captures photons, and an electron transfer chain that converts photonic excitation into a charge separation. The eukaryotic PSI reaction center is composed of at least 11 subunits.</text>
</comment>
<comment type="subcellular location">
    <subcellularLocation>
        <location evidence="1">Plastid</location>
        <location evidence="1">Chloroplast thylakoid membrane</location>
        <topology evidence="1">Multi-pass membrane protein</topology>
    </subcellularLocation>
</comment>
<comment type="similarity">
    <text evidence="1">Belongs to the PsaA/PsaB family.</text>
</comment>
<comment type="sequence caution" evidence="2">
    <conflict type="erroneous initiation">
        <sequence resource="EMBL-CDS" id="AAS46121"/>
    </conflict>
</comment>